<proteinExistence type="inferred from homology"/>
<gene>
    <name evidence="1" type="primary">rpsK</name>
    <name type="ordered locus">SpyM3_0065</name>
</gene>
<organism>
    <name type="scientific">Streptococcus pyogenes serotype M3 (strain ATCC BAA-595 / MGAS315)</name>
    <dbReference type="NCBI Taxonomy" id="198466"/>
    <lineage>
        <taxon>Bacteria</taxon>
        <taxon>Bacillati</taxon>
        <taxon>Bacillota</taxon>
        <taxon>Bacilli</taxon>
        <taxon>Lactobacillales</taxon>
        <taxon>Streptococcaceae</taxon>
        <taxon>Streptococcus</taxon>
    </lineage>
</organism>
<protein>
    <recommendedName>
        <fullName evidence="1">Small ribosomal subunit protein uS11</fullName>
    </recommendedName>
    <alternativeName>
        <fullName evidence="2">30S ribosomal protein S11</fullName>
    </alternativeName>
</protein>
<comment type="function">
    <text evidence="1">Located on the platform of the 30S subunit, it bridges several disparate RNA helices of the 16S rRNA. Forms part of the Shine-Dalgarno cleft in the 70S ribosome.</text>
</comment>
<comment type="subunit">
    <text evidence="1">Part of the 30S ribosomal subunit. Interacts with proteins S7 and S18. Binds to IF-3.</text>
</comment>
<comment type="similarity">
    <text evidence="1">Belongs to the universal ribosomal protein uS11 family.</text>
</comment>
<comment type="sequence caution" evidence="2">
    <conflict type="erroneous initiation">
        <sequence resource="EMBL-CDS" id="AAM78672"/>
    </conflict>
</comment>
<sequence length="127" mass="13369">MAKPTRKRRVKKNIESGVAHIHATFNNTIVMITDVHGNALAWSSAGALGFKGSRKSTPFAAQMAAEAAAKSAQEHGLKTVEVTVKGPGSGRESAIRALAAAGLEVTAIRDVTPVPHNGARPPKRRRV</sequence>
<dbReference type="EMBL" id="AE014074">
    <property type="protein sequence ID" value="AAM78672.1"/>
    <property type="status" value="ALT_INIT"/>
    <property type="molecule type" value="Genomic_DNA"/>
</dbReference>
<dbReference type="RefSeq" id="WP_001118387.1">
    <property type="nucleotide sequence ID" value="NC_004070.1"/>
</dbReference>
<dbReference type="SMR" id="P0DE64"/>
<dbReference type="GeneID" id="93825319"/>
<dbReference type="KEGG" id="spg:SpyM3_0065"/>
<dbReference type="HOGENOM" id="CLU_072439_5_0_9"/>
<dbReference type="Proteomes" id="UP000000564">
    <property type="component" value="Chromosome"/>
</dbReference>
<dbReference type="GO" id="GO:1990904">
    <property type="term" value="C:ribonucleoprotein complex"/>
    <property type="evidence" value="ECO:0007669"/>
    <property type="project" value="UniProtKB-KW"/>
</dbReference>
<dbReference type="GO" id="GO:0005840">
    <property type="term" value="C:ribosome"/>
    <property type="evidence" value="ECO:0007669"/>
    <property type="project" value="UniProtKB-KW"/>
</dbReference>
<dbReference type="GO" id="GO:0019843">
    <property type="term" value="F:rRNA binding"/>
    <property type="evidence" value="ECO:0007669"/>
    <property type="project" value="UniProtKB-UniRule"/>
</dbReference>
<dbReference type="GO" id="GO:0003735">
    <property type="term" value="F:structural constituent of ribosome"/>
    <property type="evidence" value="ECO:0007669"/>
    <property type="project" value="InterPro"/>
</dbReference>
<dbReference type="GO" id="GO:0006412">
    <property type="term" value="P:translation"/>
    <property type="evidence" value="ECO:0007669"/>
    <property type="project" value="UniProtKB-UniRule"/>
</dbReference>
<dbReference type="FunFam" id="3.30.420.80:FF:000001">
    <property type="entry name" value="30S ribosomal protein S11"/>
    <property type="match status" value="1"/>
</dbReference>
<dbReference type="Gene3D" id="3.30.420.80">
    <property type="entry name" value="Ribosomal protein S11"/>
    <property type="match status" value="1"/>
</dbReference>
<dbReference type="HAMAP" id="MF_01310">
    <property type="entry name" value="Ribosomal_uS11"/>
    <property type="match status" value="1"/>
</dbReference>
<dbReference type="InterPro" id="IPR001971">
    <property type="entry name" value="Ribosomal_uS11"/>
</dbReference>
<dbReference type="InterPro" id="IPR019981">
    <property type="entry name" value="Ribosomal_uS11_bac-type"/>
</dbReference>
<dbReference type="InterPro" id="IPR018102">
    <property type="entry name" value="Ribosomal_uS11_CS"/>
</dbReference>
<dbReference type="InterPro" id="IPR036967">
    <property type="entry name" value="Ribosomal_uS11_sf"/>
</dbReference>
<dbReference type="NCBIfam" id="NF003698">
    <property type="entry name" value="PRK05309.1"/>
    <property type="match status" value="1"/>
</dbReference>
<dbReference type="NCBIfam" id="TIGR03632">
    <property type="entry name" value="uS11_bact"/>
    <property type="match status" value="1"/>
</dbReference>
<dbReference type="PANTHER" id="PTHR11759">
    <property type="entry name" value="40S RIBOSOMAL PROTEIN S14/30S RIBOSOMAL PROTEIN S11"/>
    <property type="match status" value="1"/>
</dbReference>
<dbReference type="Pfam" id="PF00411">
    <property type="entry name" value="Ribosomal_S11"/>
    <property type="match status" value="1"/>
</dbReference>
<dbReference type="PIRSF" id="PIRSF002131">
    <property type="entry name" value="Ribosomal_S11"/>
    <property type="match status" value="1"/>
</dbReference>
<dbReference type="SUPFAM" id="SSF53137">
    <property type="entry name" value="Translational machinery components"/>
    <property type="match status" value="1"/>
</dbReference>
<dbReference type="PROSITE" id="PS00054">
    <property type="entry name" value="RIBOSOMAL_S11"/>
    <property type="match status" value="1"/>
</dbReference>
<name>RS11_STRP3</name>
<keyword id="KW-0687">Ribonucleoprotein</keyword>
<keyword id="KW-0689">Ribosomal protein</keyword>
<keyword id="KW-0694">RNA-binding</keyword>
<keyword id="KW-0699">rRNA-binding</keyword>
<reference key="1">
    <citation type="journal article" date="2002" name="Proc. Natl. Acad. Sci. U.S.A.">
        <title>Genome sequence of a serotype M3 strain of group A Streptococcus: phage-encoded toxins, the high-virulence phenotype, and clone emergence.</title>
        <authorList>
            <person name="Beres S.B."/>
            <person name="Sylva G.L."/>
            <person name="Barbian K.D."/>
            <person name="Lei B."/>
            <person name="Hoff J.S."/>
            <person name="Mammarella N.D."/>
            <person name="Liu M.-Y."/>
            <person name="Smoot J.C."/>
            <person name="Porcella S.F."/>
            <person name="Parkins L.D."/>
            <person name="Campbell D.S."/>
            <person name="Smith T.M."/>
            <person name="McCormick J.K."/>
            <person name="Leung D.Y.M."/>
            <person name="Schlievert P.M."/>
            <person name="Musser J.M."/>
        </authorList>
    </citation>
    <scope>NUCLEOTIDE SEQUENCE [LARGE SCALE GENOMIC DNA]</scope>
    <source>
        <strain>ATCC BAA-595 / MGAS315</strain>
    </source>
</reference>
<accession>P0DE64</accession>
<accession>P66361</accession>
<accession>Q8K8X0</accession>
<accession>Q8P2Z3</accession>
<evidence type="ECO:0000255" key="1">
    <source>
        <dbReference type="HAMAP-Rule" id="MF_01310"/>
    </source>
</evidence>
<evidence type="ECO:0000305" key="2"/>
<feature type="chain" id="PRO_0000123236" description="Small ribosomal subunit protein uS11">
    <location>
        <begin position="1"/>
        <end position="127"/>
    </location>
</feature>